<proteinExistence type="inferred from homology"/>
<sequence length="327" mass="35411">MVKKIGVLTSGGDAPGMNAAIRGVVRAALSAGLDVFGIEDGYLGLYENRMKKLDRYSVSDMINRGGTFLGSARFPEFRDPEVRKVALKNMHERGIDGLVVIGGDGSYAGADLLTKEGGIHCVGLPGTIDNDVAGTDYTIGFFTALETVVEAIDRLRDTSSSHQRISIVEVMGRYCGDLTLAAAIAGGCEFIAIPEVEFKRDDLVAEIKAGIAKGKKHAIVAITEKLDDIDSLAKYIEKETGRETRGTVLGHIQRGGAPVAYDRILASRMGSYAVDLLLQDHDYKKGGFCVGVQNEKMVHELISVCIAPENKKSKFKEDWYDTAKKLF</sequence>
<gene>
    <name evidence="1" type="primary">pfkA</name>
    <name type="ordered locus">YPTB0074</name>
</gene>
<evidence type="ECO:0000255" key="1">
    <source>
        <dbReference type="HAMAP-Rule" id="MF_00339"/>
    </source>
</evidence>
<name>PFKA_YERPS</name>
<feature type="chain" id="PRO_1000059815" description="ATP-dependent 6-phosphofructokinase">
    <location>
        <begin position="1"/>
        <end position="327"/>
    </location>
</feature>
<feature type="active site" description="Proton acceptor" evidence="1">
    <location>
        <position position="129"/>
    </location>
</feature>
<feature type="binding site" evidence="1">
    <location>
        <position position="12"/>
    </location>
    <ligand>
        <name>ATP</name>
        <dbReference type="ChEBI" id="CHEBI:30616"/>
    </ligand>
</feature>
<feature type="binding site" evidence="1">
    <location>
        <begin position="22"/>
        <end position="26"/>
    </location>
    <ligand>
        <name>ADP</name>
        <dbReference type="ChEBI" id="CHEBI:456216"/>
        <note>allosteric activator; ligand shared between dimeric partners</note>
    </ligand>
</feature>
<feature type="binding site" evidence="1">
    <location>
        <begin position="55"/>
        <end position="60"/>
    </location>
    <ligand>
        <name>ADP</name>
        <dbReference type="ChEBI" id="CHEBI:456216"/>
        <note>allosteric activator; ligand shared between dimeric partners</note>
    </ligand>
</feature>
<feature type="binding site" evidence="1">
    <location>
        <begin position="73"/>
        <end position="74"/>
    </location>
    <ligand>
        <name>ATP</name>
        <dbReference type="ChEBI" id="CHEBI:30616"/>
    </ligand>
</feature>
<feature type="binding site" evidence="1">
    <location>
        <begin position="103"/>
        <end position="106"/>
    </location>
    <ligand>
        <name>ATP</name>
        <dbReference type="ChEBI" id="CHEBI:30616"/>
    </ligand>
</feature>
<feature type="binding site" evidence="1">
    <location>
        <position position="104"/>
    </location>
    <ligand>
        <name>Mg(2+)</name>
        <dbReference type="ChEBI" id="CHEBI:18420"/>
        <note>catalytic</note>
    </ligand>
</feature>
<feature type="binding site" description="in other chain" evidence="1">
    <location>
        <begin position="127"/>
        <end position="129"/>
    </location>
    <ligand>
        <name>substrate</name>
        <note>ligand shared between dimeric partners</note>
    </ligand>
</feature>
<feature type="binding site" description="in other chain" evidence="1">
    <location>
        <position position="156"/>
    </location>
    <ligand>
        <name>ADP</name>
        <dbReference type="ChEBI" id="CHEBI:456216"/>
        <note>allosteric activator; ligand shared between dimeric partners</note>
    </ligand>
</feature>
<feature type="binding site" evidence="1">
    <location>
        <position position="164"/>
    </location>
    <ligand>
        <name>substrate</name>
        <note>ligand shared between dimeric partners</note>
    </ligand>
</feature>
<feature type="binding site" description="in other chain" evidence="1">
    <location>
        <begin position="171"/>
        <end position="173"/>
    </location>
    <ligand>
        <name>substrate</name>
        <note>ligand shared between dimeric partners</note>
    </ligand>
</feature>
<feature type="binding site" description="in other chain" evidence="1">
    <location>
        <begin position="187"/>
        <end position="189"/>
    </location>
    <ligand>
        <name>ADP</name>
        <dbReference type="ChEBI" id="CHEBI:456216"/>
        <note>allosteric activator; ligand shared between dimeric partners</note>
    </ligand>
</feature>
<feature type="binding site" description="in other chain" evidence="1">
    <location>
        <position position="213"/>
    </location>
    <ligand>
        <name>ADP</name>
        <dbReference type="ChEBI" id="CHEBI:456216"/>
        <note>allosteric activator; ligand shared between dimeric partners</note>
    </ligand>
</feature>
<feature type="binding site" description="in other chain" evidence="1">
    <location>
        <begin position="215"/>
        <end position="217"/>
    </location>
    <ligand>
        <name>ADP</name>
        <dbReference type="ChEBI" id="CHEBI:456216"/>
        <note>allosteric activator; ligand shared between dimeric partners</note>
    </ligand>
</feature>
<feature type="binding site" description="in other chain" evidence="1">
    <location>
        <position position="224"/>
    </location>
    <ligand>
        <name>substrate</name>
        <note>ligand shared between dimeric partners</note>
    </ligand>
</feature>
<feature type="binding site" evidence="1">
    <location>
        <position position="245"/>
    </location>
    <ligand>
        <name>substrate</name>
        <note>ligand shared between dimeric partners</note>
    </ligand>
</feature>
<feature type="binding site" description="in other chain" evidence="1">
    <location>
        <begin position="251"/>
        <end position="254"/>
    </location>
    <ligand>
        <name>substrate</name>
        <note>ligand shared between dimeric partners</note>
    </ligand>
</feature>
<keyword id="KW-0021">Allosteric enzyme</keyword>
<keyword id="KW-0067">ATP-binding</keyword>
<keyword id="KW-0963">Cytoplasm</keyword>
<keyword id="KW-0324">Glycolysis</keyword>
<keyword id="KW-0418">Kinase</keyword>
<keyword id="KW-0460">Magnesium</keyword>
<keyword id="KW-0479">Metal-binding</keyword>
<keyword id="KW-0547">Nucleotide-binding</keyword>
<keyword id="KW-0808">Transferase</keyword>
<dbReference type="EC" id="2.7.1.11" evidence="1"/>
<dbReference type="EMBL" id="BX936398">
    <property type="protein sequence ID" value="CAH19314.1"/>
    <property type="molecule type" value="Genomic_DNA"/>
</dbReference>
<dbReference type="RefSeq" id="WP_011191458.1">
    <property type="nucleotide sequence ID" value="NC_006155.1"/>
</dbReference>
<dbReference type="SMR" id="Q66GA8"/>
<dbReference type="GeneID" id="49787956"/>
<dbReference type="KEGG" id="ypo:BZ17_2522"/>
<dbReference type="KEGG" id="yps:YPTB0074"/>
<dbReference type="PATRIC" id="fig|273123.14.peg.2645"/>
<dbReference type="UniPathway" id="UPA00109">
    <property type="reaction ID" value="UER00182"/>
</dbReference>
<dbReference type="Proteomes" id="UP000001011">
    <property type="component" value="Chromosome"/>
</dbReference>
<dbReference type="GO" id="GO:0005945">
    <property type="term" value="C:6-phosphofructokinase complex"/>
    <property type="evidence" value="ECO:0007669"/>
    <property type="project" value="TreeGrafter"/>
</dbReference>
<dbReference type="GO" id="GO:0003872">
    <property type="term" value="F:6-phosphofructokinase activity"/>
    <property type="evidence" value="ECO:0007669"/>
    <property type="project" value="UniProtKB-UniRule"/>
</dbReference>
<dbReference type="GO" id="GO:0016208">
    <property type="term" value="F:AMP binding"/>
    <property type="evidence" value="ECO:0007669"/>
    <property type="project" value="TreeGrafter"/>
</dbReference>
<dbReference type="GO" id="GO:0005524">
    <property type="term" value="F:ATP binding"/>
    <property type="evidence" value="ECO:0007669"/>
    <property type="project" value="UniProtKB-KW"/>
</dbReference>
<dbReference type="GO" id="GO:0070095">
    <property type="term" value="F:fructose-6-phosphate binding"/>
    <property type="evidence" value="ECO:0007669"/>
    <property type="project" value="TreeGrafter"/>
</dbReference>
<dbReference type="GO" id="GO:0042802">
    <property type="term" value="F:identical protein binding"/>
    <property type="evidence" value="ECO:0007669"/>
    <property type="project" value="TreeGrafter"/>
</dbReference>
<dbReference type="GO" id="GO:0046872">
    <property type="term" value="F:metal ion binding"/>
    <property type="evidence" value="ECO:0007669"/>
    <property type="project" value="UniProtKB-KW"/>
</dbReference>
<dbReference type="GO" id="GO:0048029">
    <property type="term" value="F:monosaccharide binding"/>
    <property type="evidence" value="ECO:0007669"/>
    <property type="project" value="TreeGrafter"/>
</dbReference>
<dbReference type="GO" id="GO:0061621">
    <property type="term" value="P:canonical glycolysis"/>
    <property type="evidence" value="ECO:0007669"/>
    <property type="project" value="TreeGrafter"/>
</dbReference>
<dbReference type="GO" id="GO:0030388">
    <property type="term" value="P:fructose 1,6-bisphosphate metabolic process"/>
    <property type="evidence" value="ECO:0007669"/>
    <property type="project" value="TreeGrafter"/>
</dbReference>
<dbReference type="GO" id="GO:0006002">
    <property type="term" value="P:fructose 6-phosphate metabolic process"/>
    <property type="evidence" value="ECO:0007669"/>
    <property type="project" value="InterPro"/>
</dbReference>
<dbReference type="FunFam" id="3.40.50.450:FF:000001">
    <property type="entry name" value="ATP-dependent 6-phosphofructokinase"/>
    <property type="match status" value="1"/>
</dbReference>
<dbReference type="FunFam" id="3.40.50.460:FF:000002">
    <property type="entry name" value="ATP-dependent 6-phosphofructokinase"/>
    <property type="match status" value="1"/>
</dbReference>
<dbReference type="Gene3D" id="3.40.50.450">
    <property type="match status" value="1"/>
</dbReference>
<dbReference type="Gene3D" id="3.40.50.460">
    <property type="entry name" value="Phosphofructokinase domain"/>
    <property type="match status" value="1"/>
</dbReference>
<dbReference type="HAMAP" id="MF_00339">
    <property type="entry name" value="Phosphofructokinase_I_B1"/>
    <property type="match status" value="1"/>
</dbReference>
<dbReference type="InterPro" id="IPR022953">
    <property type="entry name" value="ATP_PFK"/>
</dbReference>
<dbReference type="InterPro" id="IPR012003">
    <property type="entry name" value="ATP_PFK_prok-type"/>
</dbReference>
<dbReference type="InterPro" id="IPR012828">
    <property type="entry name" value="PFKA_ATP_prok"/>
</dbReference>
<dbReference type="InterPro" id="IPR015912">
    <property type="entry name" value="Phosphofructokinase_CS"/>
</dbReference>
<dbReference type="InterPro" id="IPR000023">
    <property type="entry name" value="Phosphofructokinase_dom"/>
</dbReference>
<dbReference type="InterPro" id="IPR035966">
    <property type="entry name" value="PKF_sf"/>
</dbReference>
<dbReference type="NCBIfam" id="TIGR02482">
    <property type="entry name" value="PFKA_ATP"/>
    <property type="match status" value="1"/>
</dbReference>
<dbReference type="NCBIfam" id="NF002872">
    <property type="entry name" value="PRK03202.1"/>
    <property type="match status" value="1"/>
</dbReference>
<dbReference type="PANTHER" id="PTHR13697:SF4">
    <property type="entry name" value="ATP-DEPENDENT 6-PHOSPHOFRUCTOKINASE"/>
    <property type="match status" value="1"/>
</dbReference>
<dbReference type="PANTHER" id="PTHR13697">
    <property type="entry name" value="PHOSPHOFRUCTOKINASE"/>
    <property type="match status" value="1"/>
</dbReference>
<dbReference type="Pfam" id="PF00365">
    <property type="entry name" value="PFK"/>
    <property type="match status" value="1"/>
</dbReference>
<dbReference type="PIRSF" id="PIRSF000532">
    <property type="entry name" value="ATP_PFK_prok"/>
    <property type="match status" value="1"/>
</dbReference>
<dbReference type="PRINTS" id="PR00476">
    <property type="entry name" value="PHFRCTKINASE"/>
</dbReference>
<dbReference type="SUPFAM" id="SSF53784">
    <property type="entry name" value="Phosphofructokinase"/>
    <property type="match status" value="1"/>
</dbReference>
<dbReference type="PROSITE" id="PS00433">
    <property type="entry name" value="PHOSPHOFRUCTOKINASE"/>
    <property type="match status" value="1"/>
</dbReference>
<organism>
    <name type="scientific">Yersinia pseudotuberculosis serotype I (strain IP32953)</name>
    <dbReference type="NCBI Taxonomy" id="273123"/>
    <lineage>
        <taxon>Bacteria</taxon>
        <taxon>Pseudomonadati</taxon>
        <taxon>Pseudomonadota</taxon>
        <taxon>Gammaproteobacteria</taxon>
        <taxon>Enterobacterales</taxon>
        <taxon>Yersiniaceae</taxon>
        <taxon>Yersinia</taxon>
    </lineage>
</organism>
<comment type="function">
    <text evidence="1">Catalyzes the phosphorylation of D-fructose 6-phosphate to fructose 1,6-bisphosphate by ATP, the first committing step of glycolysis.</text>
</comment>
<comment type="catalytic activity">
    <reaction evidence="1">
        <text>beta-D-fructose 6-phosphate + ATP = beta-D-fructose 1,6-bisphosphate + ADP + H(+)</text>
        <dbReference type="Rhea" id="RHEA:16109"/>
        <dbReference type="ChEBI" id="CHEBI:15378"/>
        <dbReference type="ChEBI" id="CHEBI:30616"/>
        <dbReference type="ChEBI" id="CHEBI:32966"/>
        <dbReference type="ChEBI" id="CHEBI:57634"/>
        <dbReference type="ChEBI" id="CHEBI:456216"/>
        <dbReference type="EC" id="2.7.1.11"/>
    </reaction>
</comment>
<comment type="cofactor">
    <cofactor evidence="1">
        <name>Mg(2+)</name>
        <dbReference type="ChEBI" id="CHEBI:18420"/>
    </cofactor>
</comment>
<comment type="activity regulation">
    <text evidence="1">Allosterically activated by ADP and other diphosphonucleosides, and allosterically inhibited by phosphoenolpyruvate.</text>
</comment>
<comment type="pathway">
    <text evidence="1">Carbohydrate degradation; glycolysis; D-glyceraldehyde 3-phosphate and glycerone phosphate from D-glucose: step 3/4.</text>
</comment>
<comment type="subunit">
    <text evidence="1">Homotetramer.</text>
</comment>
<comment type="subcellular location">
    <subcellularLocation>
        <location evidence="1">Cytoplasm</location>
    </subcellularLocation>
</comment>
<comment type="similarity">
    <text evidence="1">Belongs to the phosphofructokinase type A (PFKA) family. ATP-dependent PFK group I subfamily. Prokaryotic clade 'B1' sub-subfamily.</text>
</comment>
<accession>Q66GA8</accession>
<reference key="1">
    <citation type="journal article" date="2004" name="Proc. Natl. Acad. Sci. U.S.A.">
        <title>Insights into the evolution of Yersinia pestis through whole-genome comparison with Yersinia pseudotuberculosis.</title>
        <authorList>
            <person name="Chain P.S.G."/>
            <person name="Carniel E."/>
            <person name="Larimer F.W."/>
            <person name="Lamerdin J."/>
            <person name="Stoutland P.O."/>
            <person name="Regala W.M."/>
            <person name="Georgescu A.M."/>
            <person name="Vergez L.M."/>
            <person name="Land M.L."/>
            <person name="Motin V.L."/>
            <person name="Brubaker R.R."/>
            <person name="Fowler J."/>
            <person name="Hinnebusch J."/>
            <person name="Marceau M."/>
            <person name="Medigue C."/>
            <person name="Simonet M."/>
            <person name="Chenal-Francisque V."/>
            <person name="Souza B."/>
            <person name="Dacheux D."/>
            <person name="Elliott J.M."/>
            <person name="Derbise A."/>
            <person name="Hauser L.J."/>
            <person name="Garcia E."/>
        </authorList>
    </citation>
    <scope>NUCLEOTIDE SEQUENCE [LARGE SCALE GENOMIC DNA]</scope>
    <source>
        <strain>IP32953</strain>
    </source>
</reference>
<protein>
    <recommendedName>
        <fullName evidence="1">ATP-dependent 6-phosphofructokinase</fullName>
        <shortName evidence="1">ATP-PFK</shortName>
        <shortName evidence="1">Phosphofructokinase</shortName>
        <ecNumber evidence="1">2.7.1.11</ecNumber>
    </recommendedName>
    <alternativeName>
        <fullName evidence="1">Phosphohexokinase</fullName>
    </alternativeName>
</protein>